<accession>Q57TF9</accession>
<feature type="chain" id="PRO_0000259341" description="L-arabinose isomerase">
    <location>
        <begin position="1"/>
        <end position="500"/>
    </location>
</feature>
<feature type="binding site" evidence="1">
    <location>
        <position position="306"/>
    </location>
    <ligand>
        <name>Mn(2+)</name>
        <dbReference type="ChEBI" id="CHEBI:29035"/>
    </ligand>
</feature>
<feature type="binding site" evidence="1">
    <location>
        <position position="333"/>
    </location>
    <ligand>
        <name>Mn(2+)</name>
        <dbReference type="ChEBI" id="CHEBI:29035"/>
    </ligand>
</feature>
<feature type="binding site" evidence="1">
    <location>
        <position position="350"/>
    </location>
    <ligand>
        <name>Mn(2+)</name>
        <dbReference type="ChEBI" id="CHEBI:29035"/>
    </ligand>
</feature>
<feature type="binding site" evidence="1">
    <location>
        <position position="450"/>
    </location>
    <ligand>
        <name>Mn(2+)</name>
        <dbReference type="ChEBI" id="CHEBI:29035"/>
    </ligand>
</feature>
<proteinExistence type="inferred from homology"/>
<dbReference type="EC" id="5.3.1.4" evidence="1"/>
<dbReference type="EMBL" id="AE017220">
    <property type="protein sequence ID" value="AAX64002.1"/>
    <property type="molecule type" value="Genomic_DNA"/>
</dbReference>
<dbReference type="RefSeq" id="WP_001538955.1">
    <property type="nucleotide sequence ID" value="NC_006905.1"/>
</dbReference>
<dbReference type="SMR" id="Q57TF9"/>
<dbReference type="KEGG" id="sec:SCH_0096"/>
<dbReference type="HOGENOM" id="CLU_045663_0_0_6"/>
<dbReference type="UniPathway" id="UPA00145">
    <property type="reaction ID" value="UER00565"/>
</dbReference>
<dbReference type="Proteomes" id="UP000000538">
    <property type="component" value="Chromosome"/>
</dbReference>
<dbReference type="GO" id="GO:0005829">
    <property type="term" value="C:cytosol"/>
    <property type="evidence" value="ECO:0007669"/>
    <property type="project" value="TreeGrafter"/>
</dbReference>
<dbReference type="GO" id="GO:0008733">
    <property type="term" value="F:L-arabinose isomerase activity"/>
    <property type="evidence" value="ECO:0007669"/>
    <property type="project" value="UniProtKB-UniRule"/>
</dbReference>
<dbReference type="GO" id="GO:0030145">
    <property type="term" value="F:manganese ion binding"/>
    <property type="evidence" value="ECO:0007669"/>
    <property type="project" value="UniProtKB-UniRule"/>
</dbReference>
<dbReference type="GO" id="GO:0019569">
    <property type="term" value="P:L-arabinose catabolic process to xylulose 5-phosphate"/>
    <property type="evidence" value="ECO:0007669"/>
    <property type="project" value="UniProtKB-UniRule"/>
</dbReference>
<dbReference type="CDD" id="cd03557">
    <property type="entry name" value="L-arabinose_isomerase"/>
    <property type="match status" value="1"/>
</dbReference>
<dbReference type="FunFam" id="3.40.50.10940:FF:000001">
    <property type="entry name" value="L-arabinose isomerase"/>
    <property type="match status" value="1"/>
</dbReference>
<dbReference type="Gene3D" id="3.40.50.10940">
    <property type="match status" value="1"/>
</dbReference>
<dbReference type="HAMAP" id="MF_00519">
    <property type="entry name" value="Arabinose_Isome"/>
    <property type="match status" value="1"/>
</dbReference>
<dbReference type="InterPro" id="IPR024664">
    <property type="entry name" value="Ara_Isoase_C"/>
</dbReference>
<dbReference type="InterPro" id="IPR055390">
    <property type="entry name" value="AraA_central"/>
</dbReference>
<dbReference type="InterPro" id="IPR055389">
    <property type="entry name" value="AraA_N"/>
</dbReference>
<dbReference type="InterPro" id="IPR038583">
    <property type="entry name" value="AraA_N_sf"/>
</dbReference>
<dbReference type="InterPro" id="IPR004216">
    <property type="entry name" value="Fuc/Ara_isomerase_C"/>
</dbReference>
<dbReference type="InterPro" id="IPR009015">
    <property type="entry name" value="Fucose_isomerase_N/cen_sf"/>
</dbReference>
<dbReference type="InterPro" id="IPR003762">
    <property type="entry name" value="Lara_isomerase"/>
</dbReference>
<dbReference type="NCBIfam" id="NF002795">
    <property type="entry name" value="PRK02929.1"/>
    <property type="match status" value="1"/>
</dbReference>
<dbReference type="PANTHER" id="PTHR38464">
    <property type="entry name" value="L-ARABINOSE ISOMERASE"/>
    <property type="match status" value="1"/>
</dbReference>
<dbReference type="PANTHER" id="PTHR38464:SF1">
    <property type="entry name" value="L-ARABINOSE ISOMERASE"/>
    <property type="match status" value="1"/>
</dbReference>
<dbReference type="Pfam" id="PF24856">
    <property type="entry name" value="AraA_central"/>
    <property type="match status" value="1"/>
</dbReference>
<dbReference type="Pfam" id="PF02610">
    <property type="entry name" value="AraA_N"/>
    <property type="match status" value="1"/>
</dbReference>
<dbReference type="Pfam" id="PF11762">
    <property type="entry name" value="Arabinose_Iso_C"/>
    <property type="match status" value="1"/>
</dbReference>
<dbReference type="PIRSF" id="PIRSF001478">
    <property type="entry name" value="L-ara_isomerase"/>
    <property type="match status" value="1"/>
</dbReference>
<dbReference type="SUPFAM" id="SSF50443">
    <property type="entry name" value="FucI/AraA C-terminal domain-like"/>
    <property type="match status" value="1"/>
</dbReference>
<dbReference type="SUPFAM" id="SSF53743">
    <property type="entry name" value="FucI/AraA N-terminal and middle domains"/>
    <property type="match status" value="1"/>
</dbReference>
<protein>
    <recommendedName>
        <fullName evidence="1">L-arabinose isomerase</fullName>
        <ecNumber evidence="1">5.3.1.4</ecNumber>
    </recommendedName>
</protein>
<reference key="1">
    <citation type="journal article" date="2005" name="Nucleic Acids Res.">
        <title>The genome sequence of Salmonella enterica serovar Choleraesuis, a highly invasive and resistant zoonotic pathogen.</title>
        <authorList>
            <person name="Chiu C.-H."/>
            <person name="Tang P."/>
            <person name="Chu C."/>
            <person name="Hu S."/>
            <person name="Bao Q."/>
            <person name="Yu J."/>
            <person name="Chou Y.-Y."/>
            <person name="Wang H.-S."/>
            <person name="Lee Y.-S."/>
        </authorList>
    </citation>
    <scope>NUCLEOTIDE SEQUENCE [LARGE SCALE GENOMIC DNA]</scope>
    <source>
        <strain>SC-B67</strain>
    </source>
</reference>
<comment type="function">
    <text evidence="1">Catalyzes the conversion of L-arabinose to L-ribulose.</text>
</comment>
<comment type="catalytic activity">
    <reaction evidence="1">
        <text>beta-L-arabinopyranose = L-ribulose</text>
        <dbReference type="Rhea" id="RHEA:14821"/>
        <dbReference type="ChEBI" id="CHEBI:16880"/>
        <dbReference type="ChEBI" id="CHEBI:40886"/>
        <dbReference type="EC" id="5.3.1.4"/>
    </reaction>
</comment>
<comment type="cofactor">
    <cofactor evidence="1">
        <name>Mn(2+)</name>
        <dbReference type="ChEBI" id="CHEBI:29035"/>
    </cofactor>
    <text evidence="1">Binds 1 Mn(2+) ion per subunit.</text>
</comment>
<comment type="pathway">
    <text evidence="1">Carbohydrate degradation; L-arabinose degradation via L-ribulose; D-xylulose 5-phosphate from L-arabinose (bacterial route): step 1/3.</text>
</comment>
<comment type="subunit">
    <text evidence="1">Homohexamer.</text>
</comment>
<comment type="similarity">
    <text evidence="1">Belongs to the arabinose isomerase family.</text>
</comment>
<sequence>MTIFDNYEVWFVIGSQHLYGAETLRQVTQHAEHVVNALNTEAKLPCKLVLKPLGTSPDEITAICRDANYDDRCAGLVVWLHTFSPAKMWINGLSILNKPLLQFHTQFNAALPWDSIDMDFMNLNQTAHGGREFGFIGARMRQQHAVVTGHWQDKEAHTRIGAWMRQAVSKQDTRQLKVCRFGDNMREVAVTDGDKVAAQIKFGFSVNTWAVGDLVQVVNSIGDGDINALIDEYESSYTLTPATQIHGDKRQNVREAARIELGMKRFLEQGGFHAFTTTFEDLHGLKQLPGLAVQRLMQQGYGFAGEGDWKTAALLRIMKVMSTGLQGGTSFMEDYTYHFEKGNDLVLGSHMLEVCPSIAVEEKLILDVQHLGIGGKEDPARLIFNTQTGPAIVASLIDLGDRYRLLVNCIDTVKTPHSLPKLPVANALWKAQPDLPTASEAWILAGGAHHTVFSHALDLNDMRQFAEIHDIEIAVIDNDTRLPAFKDALRWNEVYYGLKR</sequence>
<organism>
    <name type="scientific">Salmonella choleraesuis (strain SC-B67)</name>
    <dbReference type="NCBI Taxonomy" id="321314"/>
    <lineage>
        <taxon>Bacteria</taxon>
        <taxon>Pseudomonadati</taxon>
        <taxon>Pseudomonadota</taxon>
        <taxon>Gammaproteobacteria</taxon>
        <taxon>Enterobacterales</taxon>
        <taxon>Enterobacteriaceae</taxon>
        <taxon>Salmonella</taxon>
    </lineage>
</organism>
<name>ARAA_SALCH</name>
<evidence type="ECO:0000255" key="1">
    <source>
        <dbReference type="HAMAP-Rule" id="MF_00519"/>
    </source>
</evidence>
<gene>
    <name evidence="1" type="primary">araA</name>
    <name type="ordered locus">SCH_0096</name>
</gene>
<keyword id="KW-0054">Arabinose catabolism</keyword>
<keyword id="KW-0119">Carbohydrate metabolism</keyword>
<keyword id="KW-0413">Isomerase</keyword>
<keyword id="KW-0464">Manganese</keyword>
<keyword id="KW-0479">Metal-binding</keyword>